<proteinExistence type="evidence at protein level"/>
<dbReference type="EC" id="5.4.99.48"/>
<dbReference type="EMBL" id="AC135562">
    <property type="protein sequence ID" value="AAX96835.1"/>
    <property type="status" value="ALT_SEQ"/>
    <property type="molecule type" value="Genomic_DNA"/>
</dbReference>
<dbReference type="EMBL" id="DP000010">
    <property type="protein sequence ID" value="ABA92749.2"/>
    <property type="molecule type" value="Genomic_DNA"/>
</dbReference>
<dbReference type="EMBL" id="AP008217">
    <property type="protein sequence ID" value="BAF28063.1"/>
    <property type="molecule type" value="Genomic_DNA"/>
</dbReference>
<dbReference type="EMBL" id="AP014967">
    <property type="protein sequence ID" value="BAT13616.1"/>
    <property type="molecule type" value="Genomic_DNA"/>
</dbReference>
<dbReference type="EMBL" id="AK070534">
    <property type="protein sequence ID" value="BAG92014.1"/>
    <property type="molecule type" value="mRNA"/>
</dbReference>
<dbReference type="RefSeq" id="XP_015615776.1">
    <property type="nucleotide sequence ID" value="XM_015760290.1"/>
</dbReference>
<dbReference type="SMR" id="Q2R712"/>
<dbReference type="FunCoup" id="Q2R712">
    <property type="interactions" value="408"/>
</dbReference>
<dbReference type="STRING" id="39947.Q2R712"/>
<dbReference type="PaxDb" id="39947-Q2R712"/>
<dbReference type="EnsemblPlants" id="Os11t0285000-01">
    <property type="protein sequence ID" value="Os11t0285000-01"/>
    <property type="gene ID" value="Os11g0285000"/>
</dbReference>
<dbReference type="Gramene" id="Os11t0285000-01">
    <property type="protein sequence ID" value="Os11t0285000-01"/>
    <property type="gene ID" value="Os11g0285000"/>
</dbReference>
<dbReference type="KEGG" id="dosa:Os11g0285000"/>
<dbReference type="eggNOG" id="KOG0497">
    <property type="taxonomic scope" value="Eukaryota"/>
</dbReference>
<dbReference type="HOGENOM" id="CLU_009074_2_0_1"/>
<dbReference type="InParanoid" id="Q2R712"/>
<dbReference type="OMA" id="SYECTRT"/>
<dbReference type="OrthoDB" id="21502at2759"/>
<dbReference type="BioCyc" id="MetaCyc:MONOMER-17970"/>
<dbReference type="Proteomes" id="UP000000763">
    <property type="component" value="Chromosome 11"/>
</dbReference>
<dbReference type="Proteomes" id="UP000059680">
    <property type="component" value="Chromosome 11"/>
</dbReference>
<dbReference type="GO" id="GO:0005811">
    <property type="term" value="C:lipid droplet"/>
    <property type="evidence" value="ECO:0007669"/>
    <property type="project" value="InterPro"/>
</dbReference>
<dbReference type="GO" id="GO:0016020">
    <property type="term" value="C:membrane"/>
    <property type="evidence" value="ECO:0007669"/>
    <property type="project" value="UniProtKB-SubCell"/>
</dbReference>
<dbReference type="GO" id="GO:0016866">
    <property type="term" value="F:intramolecular transferase activity"/>
    <property type="evidence" value="ECO:0007669"/>
    <property type="project" value="InterPro"/>
</dbReference>
<dbReference type="GO" id="GO:0016104">
    <property type="term" value="P:triterpenoid biosynthetic process"/>
    <property type="evidence" value="ECO:0007669"/>
    <property type="project" value="InterPro"/>
</dbReference>
<dbReference type="CDD" id="cd02892">
    <property type="entry name" value="SQCY_1"/>
    <property type="match status" value="1"/>
</dbReference>
<dbReference type="FunFam" id="1.50.10.20:FF:000011">
    <property type="entry name" value="Terpene cyclase/mutase family member"/>
    <property type="match status" value="1"/>
</dbReference>
<dbReference type="Gene3D" id="1.50.10.20">
    <property type="match status" value="2"/>
</dbReference>
<dbReference type="InterPro" id="IPR032696">
    <property type="entry name" value="SQ_cyclase_C"/>
</dbReference>
<dbReference type="InterPro" id="IPR032697">
    <property type="entry name" value="SQ_cyclase_N"/>
</dbReference>
<dbReference type="InterPro" id="IPR018333">
    <property type="entry name" value="Squalene_cyclase"/>
</dbReference>
<dbReference type="InterPro" id="IPR002365">
    <property type="entry name" value="Terpene_synthase_CS"/>
</dbReference>
<dbReference type="InterPro" id="IPR008930">
    <property type="entry name" value="Terpenoid_cyclase/PrenylTrfase"/>
</dbReference>
<dbReference type="NCBIfam" id="TIGR01787">
    <property type="entry name" value="squalene_cyclas"/>
    <property type="match status" value="1"/>
</dbReference>
<dbReference type="PANTHER" id="PTHR11764:SF88">
    <property type="entry name" value="ACHILLEOL B SYNTHASE"/>
    <property type="match status" value="1"/>
</dbReference>
<dbReference type="PANTHER" id="PTHR11764">
    <property type="entry name" value="TERPENE CYCLASE/MUTASE FAMILY MEMBER"/>
    <property type="match status" value="1"/>
</dbReference>
<dbReference type="Pfam" id="PF13243">
    <property type="entry name" value="SQHop_cyclase_C"/>
    <property type="match status" value="1"/>
</dbReference>
<dbReference type="Pfam" id="PF13249">
    <property type="entry name" value="SQHop_cyclase_N"/>
    <property type="match status" value="1"/>
</dbReference>
<dbReference type="SUPFAM" id="SSF48239">
    <property type="entry name" value="Terpenoid cyclases/Protein prenyltransferases"/>
    <property type="match status" value="2"/>
</dbReference>
<dbReference type="PROSITE" id="PS01074">
    <property type="entry name" value="TERPENE_SYNTHASES"/>
    <property type="match status" value="1"/>
</dbReference>
<name>ACBSY_ORYSJ</name>
<sequence>MWRLKIAAESGGGSGSSPLLHTGNGFLGRAVWEFDPDAGTPEERAEVARLRRDFTRHRFQRKESQDLLMRMQYAKLGHLQPDLSAVIVEDNQNVTEETILSSLRRALNQYSTLQAHDGHWPGDYSGILFIMPLLIFSMHVTGTLDVVLSLEHKREICRYIYNHQNEDGGWGTQVLGQSTMFGSCLNYATLKLLGEALHNNDALAQGRMWILSHGSATAAPQWAKIWLSVIGVYDWSGNKAIIPELWMVPHFLPIHPARFWCFVRMIYMSMAYLYGKKFVGPITPTILEIREELYNIPYSEIDWKKARDCCAKEDLRYPCSWIQDIVWTYLNKYVDPMFNVWPFNKLREISLRNLMKHIYYEDENTKYIGLCPINKALNMICCWIEDPNSDAFKRHLPRIYDFLWLAEDGMKAQVYDGCQTWETAFIVQAICSTGLVDEFSTTLEKAYGFLKNSQVLHDLPNGKSFYRHRSKGSWTLSTADNGWSVPDCTGETLQALLGLSKISPKLVGDPIKEKSLYDAVDCLLSFSNKDGTFSSYECTRTASWTEILNPSESFRNIVVDYPHVECTSSAIQGLISFTELYPGYRGVEIESCIKNAVMFIENKQQNDGSWYGTWGICFTYGAFFAIRGLIAAGRNYENSQAIRNGCKFLLSKQLSAGGWGEHYSSSEIEVYVDSGSPHAVNTSLAMLALLYSGQIERDPTPLYRAAKQLISMQLETGEFPQQEHVGCFNSSLYFNYPNYRNLYPIWALGEFWHRLVASKD</sequence>
<accession>Q2R712</accession>
<accession>A0A0P0Y1F2</accession>
<accession>Q53MS8</accession>
<keyword id="KW-0413">Isomerase</keyword>
<keyword id="KW-0472">Membrane</keyword>
<keyword id="KW-1185">Reference proteome</keyword>
<keyword id="KW-0677">Repeat</keyword>
<keyword id="KW-0812">Transmembrane</keyword>
<keyword id="KW-1133">Transmembrane helix</keyword>
<feature type="chain" id="PRO_0000418966" description="Achilleol B synthase">
    <location>
        <begin position="1"/>
        <end position="760"/>
    </location>
</feature>
<feature type="transmembrane region" description="Helical" evidence="2">
    <location>
        <begin position="612"/>
        <end position="632"/>
    </location>
</feature>
<feature type="repeat" description="PFTB 1">
    <location>
        <begin position="153"/>
        <end position="194"/>
    </location>
</feature>
<feature type="repeat" description="PFTB 2">
    <location>
        <begin position="642"/>
        <end position="688"/>
    </location>
</feature>
<feature type="active site" description="Proton donor" evidence="1">
    <location>
        <position position="487"/>
    </location>
</feature>
<reference key="1">
    <citation type="journal article" date="2005" name="BMC Biol.">
        <title>The sequence of rice chromosomes 11 and 12, rich in disease resistance genes and recent gene duplications.</title>
        <authorList>
            <consortium name="The rice chromosomes 11 and 12 sequencing consortia"/>
        </authorList>
    </citation>
    <scope>NUCLEOTIDE SEQUENCE [LARGE SCALE GENOMIC DNA]</scope>
    <source>
        <strain>cv. Nipponbare</strain>
    </source>
</reference>
<reference key="2">
    <citation type="journal article" date="2005" name="Nature">
        <title>The map-based sequence of the rice genome.</title>
        <authorList>
            <consortium name="International rice genome sequencing project (IRGSP)"/>
        </authorList>
    </citation>
    <scope>NUCLEOTIDE SEQUENCE [LARGE SCALE GENOMIC DNA]</scope>
    <source>
        <strain>cv. Nipponbare</strain>
    </source>
</reference>
<reference key="3">
    <citation type="journal article" date="2008" name="Nucleic Acids Res.">
        <title>The rice annotation project database (RAP-DB): 2008 update.</title>
        <authorList>
            <consortium name="The rice annotation project (RAP)"/>
        </authorList>
    </citation>
    <scope>GENOME REANNOTATION</scope>
    <source>
        <strain>cv. Nipponbare</strain>
    </source>
</reference>
<reference key="4">
    <citation type="journal article" date="2013" name="Rice">
        <title>Improvement of the Oryza sativa Nipponbare reference genome using next generation sequence and optical map data.</title>
        <authorList>
            <person name="Kawahara Y."/>
            <person name="de la Bastide M."/>
            <person name="Hamilton J.P."/>
            <person name="Kanamori H."/>
            <person name="McCombie W.R."/>
            <person name="Ouyang S."/>
            <person name="Schwartz D.C."/>
            <person name="Tanaka T."/>
            <person name="Wu J."/>
            <person name="Zhou S."/>
            <person name="Childs K.L."/>
            <person name="Davidson R.M."/>
            <person name="Lin H."/>
            <person name="Quesada-Ocampo L."/>
            <person name="Vaillancourt B."/>
            <person name="Sakai H."/>
            <person name="Lee S.S."/>
            <person name="Kim J."/>
            <person name="Numa H."/>
            <person name="Itoh T."/>
            <person name="Buell C.R."/>
            <person name="Matsumoto T."/>
        </authorList>
    </citation>
    <scope>GENOME REANNOTATION</scope>
    <source>
        <strain>cv. Nipponbare</strain>
    </source>
</reference>
<reference key="5">
    <citation type="journal article" date="2003" name="Science">
        <title>Collection, mapping, and annotation of over 28,000 cDNA clones from japonica rice.</title>
        <authorList>
            <consortium name="The rice full-length cDNA consortium"/>
        </authorList>
    </citation>
    <scope>NUCLEOTIDE SEQUENCE [LARGE SCALE MRNA]</scope>
    <source>
        <strain>cv. Nipponbare</strain>
    </source>
</reference>
<reference key="6">
    <citation type="journal article" date="2011" name="Org. Lett.">
        <title>Triterpene cyclases from Oryza sativa L.: cycloartenol, parkeol and achilleol B synthases.</title>
        <authorList>
            <person name="Ito R."/>
            <person name="Mori K."/>
            <person name="Hashimoto I."/>
            <person name="Nakano C."/>
            <person name="Sato T."/>
            <person name="Hoshino T."/>
        </authorList>
    </citation>
    <scope>FUNCTION</scope>
    <scope>CATALYTIC ACTIVITY</scope>
</reference>
<evidence type="ECO:0000250" key="1">
    <source>
        <dbReference type="UniProtKB" id="P48449"/>
    </source>
</evidence>
<evidence type="ECO:0000255" key="2"/>
<evidence type="ECO:0000269" key="3">
    <source>
    </source>
</evidence>
<evidence type="ECO:0000305" key="4"/>
<gene>
    <name type="ordered locus">Os11g0285000</name>
    <name type="ordered locus">LOC_Os11g18194</name>
</gene>
<protein>
    <recommendedName>
        <fullName>Achilleol B synthase</fullName>
        <ecNumber>5.4.99.48</ecNumber>
    </recommendedName>
</protein>
<organism>
    <name type="scientific">Oryza sativa subsp. japonica</name>
    <name type="common">Rice</name>
    <dbReference type="NCBI Taxonomy" id="39947"/>
    <lineage>
        <taxon>Eukaryota</taxon>
        <taxon>Viridiplantae</taxon>
        <taxon>Streptophyta</taxon>
        <taxon>Embryophyta</taxon>
        <taxon>Tracheophyta</taxon>
        <taxon>Spermatophyta</taxon>
        <taxon>Magnoliopsida</taxon>
        <taxon>Liliopsida</taxon>
        <taxon>Poales</taxon>
        <taxon>Poaceae</taxon>
        <taxon>BOP clade</taxon>
        <taxon>Oryzoideae</taxon>
        <taxon>Oryzeae</taxon>
        <taxon>Oryzinae</taxon>
        <taxon>Oryza</taxon>
        <taxon>Oryza sativa</taxon>
    </lineage>
</organism>
<comment type="function">
    <text evidence="3">Specifically mediates the conversion of oxidosqualene ((3S)-2,3-epoxy-2,3-dihydrosqualene) to achilleol B. Achilleol B is probably formed by cleavage of the 8-14 and 9-10 bonds of (3S)-2,3-epoxy-2,3-dihydrosqualene as part of the cyclization reaction, after formation of the oleanane skeleton.</text>
</comment>
<comment type="catalytic activity">
    <reaction evidence="3">
        <text>(S)-2,3-epoxysqualene = achilleol B</text>
        <dbReference type="Rhea" id="RHEA:31855"/>
        <dbReference type="ChEBI" id="CHEBI:15441"/>
        <dbReference type="ChEBI" id="CHEBI:63461"/>
        <dbReference type="EC" id="5.4.99.48"/>
    </reaction>
</comment>
<comment type="subcellular location">
    <subcellularLocation>
        <location evidence="4">Membrane</location>
        <topology evidence="4">Single-pass membrane protein</topology>
    </subcellularLocation>
</comment>
<comment type="similarity">
    <text evidence="4">Belongs to the terpene cyclase/mutase family.</text>
</comment>
<comment type="sequence caution" evidence="4">
    <conflict type="erroneous gene model prediction">
        <sequence resource="EMBL-CDS" id="AAX96835"/>
    </conflict>
</comment>